<dbReference type="EC" id="6.5.1.2" evidence="1"/>
<dbReference type="EMBL" id="AE008923">
    <property type="protein sequence ID" value="AAM36495.1"/>
    <property type="molecule type" value="Genomic_DNA"/>
</dbReference>
<dbReference type="RefSeq" id="WP_011051040.1">
    <property type="nucleotide sequence ID" value="NC_003919.1"/>
</dbReference>
<dbReference type="SMR" id="Q8PM07"/>
<dbReference type="GeneID" id="66910787"/>
<dbReference type="KEGG" id="xac:XAC1627"/>
<dbReference type="eggNOG" id="COG0272">
    <property type="taxonomic scope" value="Bacteria"/>
</dbReference>
<dbReference type="HOGENOM" id="CLU_007764_2_1_6"/>
<dbReference type="Proteomes" id="UP000000576">
    <property type="component" value="Chromosome"/>
</dbReference>
<dbReference type="GO" id="GO:0005829">
    <property type="term" value="C:cytosol"/>
    <property type="evidence" value="ECO:0007669"/>
    <property type="project" value="TreeGrafter"/>
</dbReference>
<dbReference type="GO" id="GO:0003911">
    <property type="term" value="F:DNA ligase (NAD+) activity"/>
    <property type="evidence" value="ECO:0007669"/>
    <property type="project" value="UniProtKB-UniRule"/>
</dbReference>
<dbReference type="GO" id="GO:0046872">
    <property type="term" value="F:metal ion binding"/>
    <property type="evidence" value="ECO:0007669"/>
    <property type="project" value="UniProtKB-KW"/>
</dbReference>
<dbReference type="GO" id="GO:0006281">
    <property type="term" value="P:DNA repair"/>
    <property type="evidence" value="ECO:0007669"/>
    <property type="project" value="UniProtKB-KW"/>
</dbReference>
<dbReference type="GO" id="GO:0006260">
    <property type="term" value="P:DNA replication"/>
    <property type="evidence" value="ECO:0007669"/>
    <property type="project" value="UniProtKB-KW"/>
</dbReference>
<dbReference type="CDD" id="cd17748">
    <property type="entry name" value="BRCT_DNA_ligase_like"/>
    <property type="match status" value="1"/>
</dbReference>
<dbReference type="CDD" id="cd00114">
    <property type="entry name" value="LIGANc"/>
    <property type="match status" value="1"/>
</dbReference>
<dbReference type="FunFam" id="1.10.150.20:FF:000006">
    <property type="entry name" value="DNA ligase"/>
    <property type="match status" value="1"/>
</dbReference>
<dbReference type="FunFam" id="1.10.150.20:FF:000007">
    <property type="entry name" value="DNA ligase"/>
    <property type="match status" value="1"/>
</dbReference>
<dbReference type="FunFam" id="1.10.287.610:FF:000002">
    <property type="entry name" value="DNA ligase"/>
    <property type="match status" value="1"/>
</dbReference>
<dbReference type="FunFam" id="2.40.50.140:FF:000012">
    <property type="entry name" value="DNA ligase"/>
    <property type="match status" value="1"/>
</dbReference>
<dbReference type="FunFam" id="3.30.470.30:FF:000001">
    <property type="entry name" value="DNA ligase"/>
    <property type="match status" value="1"/>
</dbReference>
<dbReference type="FunFam" id="3.40.50.10190:FF:000054">
    <property type="entry name" value="DNA ligase"/>
    <property type="match status" value="1"/>
</dbReference>
<dbReference type="Gene3D" id="6.20.10.30">
    <property type="match status" value="1"/>
</dbReference>
<dbReference type="Gene3D" id="1.10.150.20">
    <property type="entry name" value="5' to 3' exonuclease, C-terminal subdomain"/>
    <property type="match status" value="3"/>
</dbReference>
<dbReference type="Gene3D" id="3.40.50.10190">
    <property type="entry name" value="BRCT domain"/>
    <property type="match status" value="1"/>
</dbReference>
<dbReference type="Gene3D" id="3.30.470.30">
    <property type="entry name" value="DNA ligase/mRNA capping enzyme"/>
    <property type="match status" value="1"/>
</dbReference>
<dbReference type="Gene3D" id="1.10.287.610">
    <property type="entry name" value="Helix hairpin bin"/>
    <property type="match status" value="1"/>
</dbReference>
<dbReference type="Gene3D" id="2.40.50.140">
    <property type="entry name" value="Nucleic acid-binding proteins"/>
    <property type="match status" value="1"/>
</dbReference>
<dbReference type="HAMAP" id="MF_01588">
    <property type="entry name" value="DNA_ligase_A"/>
    <property type="match status" value="1"/>
</dbReference>
<dbReference type="InterPro" id="IPR001357">
    <property type="entry name" value="BRCT_dom"/>
</dbReference>
<dbReference type="InterPro" id="IPR036420">
    <property type="entry name" value="BRCT_dom_sf"/>
</dbReference>
<dbReference type="InterPro" id="IPR041663">
    <property type="entry name" value="DisA/LigA_HHH"/>
</dbReference>
<dbReference type="InterPro" id="IPR001679">
    <property type="entry name" value="DNA_ligase"/>
</dbReference>
<dbReference type="InterPro" id="IPR018239">
    <property type="entry name" value="DNA_ligase_AS"/>
</dbReference>
<dbReference type="InterPro" id="IPR013839">
    <property type="entry name" value="DNAligase_adenylation"/>
</dbReference>
<dbReference type="InterPro" id="IPR013840">
    <property type="entry name" value="DNAligase_N"/>
</dbReference>
<dbReference type="InterPro" id="IPR012340">
    <property type="entry name" value="NA-bd_OB-fold"/>
</dbReference>
<dbReference type="InterPro" id="IPR004150">
    <property type="entry name" value="NAD_DNA_ligase_OB"/>
</dbReference>
<dbReference type="InterPro" id="IPR010994">
    <property type="entry name" value="RuvA_2-like"/>
</dbReference>
<dbReference type="InterPro" id="IPR004149">
    <property type="entry name" value="Znf_DNAligase_C4"/>
</dbReference>
<dbReference type="NCBIfam" id="TIGR00575">
    <property type="entry name" value="dnlj"/>
    <property type="match status" value="1"/>
</dbReference>
<dbReference type="NCBIfam" id="NF005932">
    <property type="entry name" value="PRK07956.1"/>
    <property type="match status" value="1"/>
</dbReference>
<dbReference type="PANTHER" id="PTHR23389">
    <property type="entry name" value="CHROMOSOME TRANSMISSION FIDELITY FACTOR 18"/>
    <property type="match status" value="1"/>
</dbReference>
<dbReference type="PANTHER" id="PTHR23389:SF9">
    <property type="entry name" value="DNA LIGASE"/>
    <property type="match status" value="1"/>
</dbReference>
<dbReference type="Pfam" id="PF00533">
    <property type="entry name" value="BRCT"/>
    <property type="match status" value="1"/>
</dbReference>
<dbReference type="Pfam" id="PF01653">
    <property type="entry name" value="DNA_ligase_aden"/>
    <property type="match status" value="1"/>
</dbReference>
<dbReference type="Pfam" id="PF03120">
    <property type="entry name" value="DNA_ligase_OB"/>
    <property type="match status" value="1"/>
</dbReference>
<dbReference type="Pfam" id="PF03119">
    <property type="entry name" value="DNA_ligase_ZBD"/>
    <property type="match status" value="1"/>
</dbReference>
<dbReference type="Pfam" id="PF12826">
    <property type="entry name" value="HHH_2"/>
    <property type="match status" value="1"/>
</dbReference>
<dbReference type="Pfam" id="PF22745">
    <property type="entry name" value="Nlig-Ia"/>
    <property type="match status" value="1"/>
</dbReference>
<dbReference type="PIRSF" id="PIRSF001604">
    <property type="entry name" value="LigA"/>
    <property type="match status" value="1"/>
</dbReference>
<dbReference type="SMART" id="SM00292">
    <property type="entry name" value="BRCT"/>
    <property type="match status" value="1"/>
</dbReference>
<dbReference type="SMART" id="SM00532">
    <property type="entry name" value="LIGANc"/>
    <property type="match status" value="1"/>
</dbReference>
<dbReference type="SUPFAM" id="SSF52113">
    <property type="entry name" value="BRCT domain"/>
    <property type="match status" value="1"/>
</dbReference>
<dbReference type="SUPFAM" id="SSF56091">
    <property type="entry name" value="DNA ligase/mRNA capping enzyme, catalytic domain"/>
    <property type="match status" value="1"/>
</dbReference>
<dbReference type="SUPFAM" id="SSF50249">
    <property type="entry name" value="Nucleic acid-binding proteins"/>
    <property type="match status" value="1"/>
</dbReference>
<dbReference type="SUPFAM" id="SSF47781">
    <property type="entry name" value="RuvA domain 2-like"/>
    <property type="match status" value="2"/>
</dbReference>
<dbReference type="PROSITE" id="PS50172">
    <property type="entry name" value="BRCT"/>
    <property type="match status" value="1"/>
</dbReference>
<dbReference type="PROSITE" id="PS01055">
    <property type="entry name" value="DNA_LIGASE_N1"/>
    <property type="match status" value="1"/>
</dbReference>
<feature type="chain" id="PRO_0000313514" description="DNA ligase">
    <location>
        <begin position="1"/>
        <end position="833"/>
    </location>
</feature>
<feature type="domain" description="BRCT" evidence="1">
    <location>
        <begin position="750"/>
        <end position="833"/>
    </location>
</feature>
<feature type="active site" description="N6-AMP-lysine intermediate" evidence="1">
    <location>
        <position position="117"/>
    </location>
</feature>
<feature type="binding site" evidence="1">
    <location>
        <begin position="35"/>
        <end position="39"/>
    </location>
    <ligand>
        <name>NAD(+)</name>
        <dbReference type="ChEBI" id="CHEBI:57540"/>
    </ligand>
</feature>
<feature type="binding site" evidence="1">
    <location>
        <begin position="84"/>
        <end position="85"/>
    </location>
    <ligand>
        <name>NAD(+)</name>
        <dbReference type="ChEBI" id="CHEBI:57540"/>
    </ligand>
</feature>
<feature type="binding site" evidence="1">
    <location>
        <position position="115"/>
    </location>
    <ligand>
        <name>NAD(+)</name>
        <dbReference type="ChEBI" id="CHEBI:57540"/>
    </ligand>
</feature>
<feature type="binding site" evidence="1">
    <location>
        <position position="138"/>
    </location>
    <ligand>
        <name>NAD(+)</name>
        <dbReference type="ChEBI" id="CHEBI:57540"/>
    </ligand>
</feature>
<feature type="binding site" evidence="1">
    <location>
        <position position="175"/>
    </location>
    <ligand>
        <name>NAD(+)</name>
        <dbReference type="ChEBI" id="CHEBI:57540"/>
    </ligand>
</feature>
<feature type="binding site" evidence="1">
    <location>
        <position position="292"/>
    </location>
    <ligand>
        <name>NAD(+)</name>
        <dbReference type="ChEBI" id="CHEBI:57540"/>
    </ligand>
</feature>
<feature type="binding site" evidence="1">
    <location>
        <position position="316"/>
    </location>
    <ligand>
        <name>NAD(+)</name>
        <dbReference type="ChEBI" id="CHEBI:57540"/>
    </ligand>
</feature>
<feature type="binding site" evidence="1">
    <location>
        <position position="410"/>
    </location>
    <ligand>
        <name>Zn(2+)</name>
        <dbReference type="ChEBI" id="CHEBI:29105"/>
    </ligand>
</feature>
<feature type="binding site" evidence="1">
    <location>
        <position position="413"/>
    </location>
    <ligand>
        <name>Zn(2+)</name>
        <dbReference type="ChEBI" id="CHEBI:29105"/>
    </ligand>
</feature>
<feature type="binding site" evidence="1">
    <location>
        <position position="428"/>
    </location>
    <ligand>
        <name>Zn(2+)</name>
        <dbReference type="ChEBI" id="CHEBI:29105"/>
    </ligand>
</feature>
<feature type="binding site" evidence="1">
    <location>
        <position position="434"/>
    </location>
    <ligand>
        <name>Zn(2+)</name>
        <dbReference type="ChEBI" id="CHEBI:29105"/>
    </ligand>
</feature>
<gene>
    <name evidence="1" type="primary">ligA</name>
    <name type="ordered locus">XAC1627</name>
</gene>
<protein>
    <recommendedName>
        <fullName evidence="1">DNA ligase</fullName>
        <ecNumber evidence="1">6.5.1.2</ecNumber>
    </recommendedName>
    <alternativeName>
        <fullName evidence="1">Polydeoxyribonucleotide synthase [NAD(+)]</fullName>
    </alternativeName>
</protein>
<name>DNLJ_XANAC</name>
<proteinExistence type="inferred from homology"/>
<accession>Q8PM07</accession>
<comment type="function">
    <text evidence="1">DNA ligase that catalyzes the formation of phosphodiester linkages between 5'-phosphoryl and 3'-hydroxyl groups in double-stranded DNA using NAD as a coenzyme and as the energy source for the reaction. It is essential for DNA replication and repair of damaged DNA.</text>
</comment>
<comment type="catalytic activity">
    <reaction evidence="1">
        <text>NAD(+) + (deoxyribonucleotide)n-3'-hydroxyl + 5'-phospho-(deoxyribonucleotide)m = (deoxyribonucleotide)n+m + AMP + beta-nicotinamide D-nucleotide.</text>
        <dbReference type="EC" id="6.5.1.2"/>
    </reaction>
</comment>
<comment type="cofactor">
    <cofactor evidence="1">
        <name>Mg(2+)</name>
        <dbReference type="ChEBI" id="CHEBI:18420"/>
    </cofactor>
    <cofactor evidence="1">
        <name>Mn(2+)</name>
        <dbReference type="ChEBI" id="CHEBI:29035"/>
    </cofactor>
</comment>
<comment type="similarity">
    <text evidence="1">Belongs to the NAD-dependent DNA ligase family. LigA subfamily.</text>
</comment>
<organism>
    <name type="scientific">Xanthomonas axonopodis pv. citri (strain 306)</name>
    <dbReference type="NCBI Taxonomy" id="190486"/>
    <lineage>
        <taxon>Bacteria</taxon>
        <taxon>Pseudomonadati</taxon>
        <taxon>Pseudomonadota</taxon>
        <taxon>Gammaproteobacteria</taxon>
        <taxon>Lysobacterales</taxon>
        <taxon>Lysobacteraceae</taxon>
        <taxon>Xanthomonas</taxon>
    </lineage>
</organism>
<reference key="1">
    <citation type="journal article" date="2002" name="Nature">
        <title>Comparison of the genomes of two Xanthomonas pathogens with differing host specificities.</title>
        <authorList>
            <person name="da Silva A.C.R."/>
            <person name="Ferro J.A."/>
            <person name="Reinach F.C."/>
            <person name="Farah C.S."/>
            <person name="Furlan L.R."/>
            <person name="Quaggio R.B."/>
            <person name="Monteiro-Vitorello C.B."/>
            <person name="Van Sluys M.A."/>
            <person name="Almeida N.F. Jr."/>
            <person name="Alves L.M.C."/>
            <person name="do Amaral A.M."/>
            <person name="Bertolini M.C."/>
            <person name="Camargo L.E.A."/>
            <person name="Camarotte G."/>
            <person name="Cannavan F."/>
            <person name="Cardozo J."/>
            <person name="Chambergo F."/>
            <person name="Ciapina L.P."/>
            <person name="Cicarelli R.M.B."/>
            <person name="Coutinho L.L."/>
            <person name="Cursino-Santos J.R."/>
            <person name="El-Dorry H."/>
            <person name="Faria J.B."/>
            <person name="Ferreira A.J.S."/>
            <person name="Ferreira R.C.C."/>
            <person name="Ferro M.I.T."/>
            <person name="Formighieri E.F."/>
            <person name="Franco M.C."/>
            <person name="Greggio C.C."/>
            <person name="Gruber A."/>
            <person name="Katsuyama A.M."/>
            <person name="Kishi L.T."/>
            <person name="Leite R.P."/>
            <person name="Lemos E.G.M."/>
            <person name="Lemos M.V.F."/>
            <person name="Locali E.C."/>
            <person name="Machado M.A."/>
            <person name="Madeira A.M.B.N."/>
            <person name="Martinez-Rossi N.M."/>
            <person name="Martins E.C."/>
            <person name="Meidanis J."/>
            <person name="Menck C.F.M."/>
            <person name="Miyaki C.Y."/>
            <person name="Moon D.H."/>
            <person name="Moreira L.M."/>
            <person name="Novo M.T.M."/>
            <person name="Okura V.K."/>
            <person name="Oliveira M.C."/>
            <person name="Oliveira V.R."/>
            <person name="Pereira H.A."/>
            <person name="Rossi A."/>
            <person name="Sena J.A.D."/>
            <person name="Silva C."/>
            <person name="de Souza R.F."/>
            <person name="Spinola L.A.F."/>
            <person name="Takita M.A."/>
            <person name="Tamura R.E."/>
            <person name="Teixeira E.C."/>
            <person name="Tezza R.I.D."/>
            <person name="Trindade dos Santos M."/>
            <person name="Truffi D."/>
            <person name="Tsai S.M."/>
            <person name="White F.F."/>
            <person name="Setubal J.C."/>
            <person name="Kitajima J.P."/>
        </authorList>
    </citation>
    <scope>NUCLEOTIDE SEQUENCE [LARGE SCALE GENOMIC DNA]</scope>
    <source>
        <strain>306</strain>
    </source>
</reference>
<sequence length="833" mass="90484">MTASPDPAQRIDALRRRIEDANYRYHVLDEPQMADADYDKLMRELEALERAHPELASADSPTQRVGHLAASRFAEVRHAMPMLSLGNAFSDEEVTEFVRRISERLEVRQPLFSAEPKLDGLAISLRYENGEFVQGATRGDGATGEDVSANLRTVKAIPLRLRGEGWPRVLEVRGEVYMPRAAFEAYNAQMRAQGGKILANPRNGAAGSLRQLDARITAQRPLSFFAYGVGEVSEGALPQAHSAILAQLRAWGFPVSALVEVVQGSDGLLAYYQRIGEARDGLAFDIDGVVYKLDDLAGQREMGFVSRAPRWAIAHKFPAQEQSTTVEAIEIQIGRTGAATPVARLKPVHVAGVIVTNATLHNADQIARLDVRVGDTVIVRRAGDVIPEVAAVVADQRPPGTQAWQMPTQCPVCGSEIVREEGQAVWRCSGELTCPAQRKEAFRHFVSRRAMDVDGLGEKFIEVLVDSGLVKGVADLYLLSVDQLLQLRLISTADSPHAFLREAREHLASGAYAQLEASVVGIGVDLAGERDVPQTWQADLLRAGLPSFDWNRKKIATKWAENLIEAIEISRDTTLERFLFALGIEHVGESTAKALSAWFGDLELIRHLPWPLFKRVPDIGGEVARSLGHFFDQAGNQKAIDHLLARKVRIGDTHPPSPKLRGELSLANLLEDLEIPKVTPIRAAQIATAFGSIDALRNGGPEPLVEAGVPQSVAESLAAWLLVPANDTLAVNAQRKLSELLAMLPEAGEEKTGPLDGQTVVITGTLAALTRDAAKQRLEALGAKVAGSVSKKTAFLVAGEEAGSKLDKAQSLGVEIWDEARLLAFLGDHGQQP</sequence>
<evidence type="ECO:0000255" key="1">
    <source>
        <dbReference type="HAMAP-Rule" id="MF_01588"/>
    </source>
</evidence>
<keyword id="KW-0227">DNA damage</keyword>
<keyword id="KW-0234">DNA repair</keyword>
<keyword id="KW-0235">DNA replication</keyword>
<keyword id="KW-0436">Ligase</keyword>
<keyword id="KW-0460">Magnesium</keyword>
<keyword id="KW-0464">Manganese</keyword>
<keyword id="KW-0479">Metal-binding</keyword>
<keyword id="KW-0520">NAD</keyword>
<keyword id="KW-0862">Zinc</keyword>